<accession>Q21X81</accession>
<comment type="function">
    <text evidence="2">Catalyzes the formation of N(7)-methylguanine at position 46 (m7G46) in tRNA.</text>
</comment>
<comment type="catalytic activity">
    <reaction evidence="2">
        <text>guanosine(46) in tRNA + S-adenosyl-L-methionine = N(7)-methylguanosine(46) in tRNA + S-adenosyl-L-homocysteine</text>
        <dbReference type="Rhea" id="RHEA:42708"/>
        <dbReference type="Rhea" id="RHEA-COMP:10188"/>
        <dbReference type="Rhea" id="RHEA-COMP:10189"/>
        <dbReference type="ChEBI" id="CHEBI:57856"/>
        <dbReference type="ChEBI" id="CHEBI:59789"/>
        <dbReference type="ChEBI" id="CHEBI:74269"/>
        <dbReference type="ChEBI" id="CHEBI:74480"/>
        <dbReference type="EC" id="2.1.1.33"/>
    </reaction>
</comment>
<comment type="pathway">
    <text evidence="2">tRNA modification; N(7)-methylguanine-tRNA biosynthesis.</text>
</comment>
<comment type="similarity">
    <text evidence="2">Belongs to the class I-like SAM-binding methyltransferase superfamily. TrmB family.</text>
</comment>
<dbReference type="EC" id="2.1.1.33" evidence="2"/>
<dbReference type="EMBL" id="CP000267">
    <property type="protein sequence ID" value="ABD69622.1"/>
    <property type="molecule type" value="Genomic_DNA"/>
</dbReference>
<dbReference type="SMR" id="Q21X81"/>
<dbReference type="STRING" id="338969.Rfer_1896"/>
<dbReference type="KEGG" id="rfr:Rfer_1896"/>
<dbReference type="eggNOG" id="COG0220">
    <property type="taxonomic scope" value="Bacteria"/>
</dbReference>
<dbReference type="HOGENOM" id="CLU_050910_0_1_4"/>
<dbReference type="UniPathway" id="UPA00989"/>
<dbReference type="Proteomes" id="UP000008332">
    <property type="component" value="Chromosome"/>
</dbReference>
<dbReference type="GO" id="GO:0043527">
    <property type="term" value="C:tRNA methyltransferase complex"/>
    <property type="evidence" value="ECO:0007669"/>
    <property type="project" value="TreeGrafter"/>
</dbReference>
<dbReference type="GO" id="GO:0008176">
    <property type="term" value="F:tRNA (guanine(46)-N7)-methyltransferase activity"/>
    <property type="evidence" value="ECO:0007669"/>
    <property type="project" value="UniProtKB-UniRule"/>
</dbReference>
<dbReference type="CDD" id="cd02440">
    <property type="entry name" value="AdoMet_MTases"/>
    <property type="match status" value="1"/>
</dbReference>
<dbReference type="Gene3D" id="3.40.50.150">
    <property type="entry name" value="Vaccinia Virus protein VP39"/>
    <property type="match status" value="1"/>
</dbReference>
<dbReference type="HAMAP" id="MF_01057">
    <property type="entry name" value="tRNA_methyltr_TrmB"/>
    <property type="match status" value="1"/>
</dbReference>
<dbReference type="InterPro" id="IPR029063">
    <property type="entry name" value="SAM-dependent_MTases_sf"/>
</dbReference>
<dbReference type="InterPro" id="IPR003358">
    <property type="entry name" value="tRNA_(Gua-N-7)_MeTrfase_Trmb"/>
</dbReference>
<dbReference type="InterPro" id="IPR055361">
    <property type="entry name" value="tRNA_methyltr_TrmB_bact"/>
</dbReference>
<dbReference type="NCBIfam" id="TIGR00091">
    <property type="entry name" value="tRNA (guanosine(46)-N7)-methyltransferase TrmB"/>
    <property type="match status" value="1"/>
</dbReference>
<dbReference type="PANTHER" id="PTHR23417">
    <property type="entry name" value="3-DEOXY-D-MANNO-OCTULOSONIC-ACID TRANSFERASE/TRNA GUANINE-N 7 - -METHYLTRANSFERASE"/>
    <property type="match status" value="1"/>
</dbReference>
<dbReference type="PANTHER" id="PTHR23417:SF14">
    <property type="entry name" value="PENTACOTRIPEPTIDE-REPEAT REGION OF PRORP DOMAIN-CONTAINING PROTEIN"/>
    <property type="match status" value="1"/>
</dbReference>
<dbReference type="Pfam" id="PF02390">
    <property type="entry name" value="Methyltransf_4"/>
    <property type="match status" value="1"/>
</dbReference>
<dbReference type="SUPFAM" id="SSF53335">
    <property type="entry name" value="S-adenosyl-L-methionine-dependent methyltransferases"/>
    <property type="match status" value="1"/>
</dbReference>
<dbReference type="PROSITE" id="PS51625">
    <property type="entry name" value="SAM_MT_TRMB"/>
    <property type="match status" value="1"/>
</dbReference>
<proteinExistence type="inferred from homology"/>
<protein>
    <recommendedName>
        <fullName evidence="2">tRNA (guanine-N(7)-)-methyltransferase</fullName>
        <ecNumber evidence="2">2.1.1.33</ecNumber>
    </recommendedName>
    <alternativeName>
        <fullName evidence="2">tRNA (guanine(46)-N(7))-methyltransferase</fullName>
    </alternativeName>
    <alternativeName>
        <fullName evidence="2">tRNA(m7G46)-methyltransferase</fullName>
    </alternativeName>
</protein>
<feature type="chain" id="PRO_0000288212" description="tRNA (guanine-N(7)-)-methyltransferase">
    <location>
        <begin position="1"/>
        <end position="245"/>
    </location>
</feature>
<feature type="region of interest" description="Interaction with RNA" evidence="2">
    <location>
        <begin position="152"/>
        <end position="157"/>
    </location>
</feature>
<feature type="active site" evidence="1">
    <location>
        <position position="146"/>
    </location>
</feature>
<feature type="binding site" evidence="2">
    <location>
        <position position="71"/>
    </location>
    <ligand>
        <name>S-adenosyl-L-methionine</name>
        <dbReference type="ChEBI" id="CHEBI:59789"/>
    </ligand>
</feature>
<feature type="binding site" evidence="2">
    <location>
        <position position="96"/>
    </location>
    <ligand>
        <name>S-adenosyl-L-methionine</name>
        <dbReference type="ChEBI" id="CHEBI:59789"/>
    </ligand>
</feature>
<feature type="binding site" evidence="2">
    <location>
        <position position="123"/>
    </location>
    <ligand>
        <name>S-adenosyl-L-methionine</name>
        <dbReference type="ChEBI" id="CHEBI:59789"/>
    </ligand>
</feature>
<feature type="binding site" evidence="2">
    <location>
        <position position="146"/>
    </location>
    <ligand>
        <name>S-adenosyl-L-methionine</name>
        <dbReference type="ChEBI" id="CHEBI:59789"/>
    </ligand>
</feature>
<feature type="binding site" evidence="2">
    <location>
        <position position="150"/>
    </location>
    <ligand>
        <name>substrate</name>
    </ligand>
</feature>
<feature type="binding site" evidence="2">
    <location>
        <position position="182"/>
    </location>
    <ligand>
        <name>substrate</name>
    </ligand>
</feature>
<feature type="binding site" evidence="2">
    <location>
        <begin position="224"/>
        <end position="227"/>
    </location>
    <ligand>
        <name>substrate</name>
    </ligand>
</feature>
<organism>
    <name type="scientific">Albidiferax ferrireducens (strain ATCC BAA-621 / DSM 15236 / T118)</name>
    <name type="common">Rhodoferax ferrireducens</name>
    <dbReference type="NCBI Taxonomy" id="338969"/>
    <lineage>
        <taxon>Bacteria</taxon>
        <taxon>Pseudomonadati</taxon>
        <taxon>Pseudomonadota</taxon>
        <taxon>Betaproteobacteria</taxon>
        <taxon>Burkholderiales</taxon>
        <taxon>Comamonadaceae</taxon>
        <taxon>Rhodoferax</taxon>
    </lineage>
</organism>
<sequence>MPEGVAFPKEIKSFVRRAGRTTTGQAKALEDMGPQFLLPYQTSAIDFIATYADSTGARGNNDINPGPVILEIGFGMGEATAHIAALMPEKNFLCCEVHEPGVGALLKRIGEQGLRNIRIVAHDAVEVIDHMLPLQSLDGVHIFFPDPWHKKKHNKRRLIQSALIAKLAARLKVGGYIHCATDWQPYAEQILEVLSKEPLLKNTATQTHPELAGYAPKPYYRPLTKFENRGIKLGHGVWDIVFERV</sequence>
<reference key="1">
    <citation type="submission" date="2006-02" db="EMBL/GenBank/DDBJ databases">
        <title>Complete sequence of chromosome of Rhodoferax ferrireducens DSM 15236.</title>
        <authorList>
            <person name="Copeland A."/>
            <person name="Lucas S."/>
            <person name="Lapidus A."/>
            <person name="Barry K."/>
            <person name="Detter J.C."/>
            <person name="Glavina del Rio T."/>
            <person name="Hammon N."/>
            <person name="Israni S."/>
            <person name="Pitluck S."/>
            <person name="Brettin T."/>
            <person name="Bruce D."/>
            <person name="Han C."/>
            <person name="Tapia R."/>
            <person name="Gilna P."/>
            <person name="Kiss H."/>
            <person name="Schmutz J."/>
            <person name="Larimer F."/>
            <person name="Land M."/>
            <person name="Kyrpides N."/>
            <person name="Ivanova N."/>
            <person name="Richardson P."/>
        </authorList>
    </citation>
    <scope>NUCLEOTIDE SEQUENCE [LARGE SCALE GENOMIC DNA]</scope>
    <source>
        <strain>ATCC BAA-621 / DSM 15236 / T118</strain>
    </source>
</reference>
<name>TRMB_ALBFT</name>
<evidence type="ECO:0000250" key="1"/>
<evidence type="ECO:0000255" key="2">
    <source>
        <dbReference type="HAMAP-Rule" id="MF_01057"/>
    </source>
</evidence>
<gene>
    <name evidence="2" type="primary">trmB</name>
    <name type="ordered locus">Rfer_1896</name>
</gene>
<keyword id="KW-0489">Methyltransferase</keyword>
<keyword id="KW-1185">Reference proteome</keyword>
<keyword id="KW-0949">S-adenosyl-L-methionine</keyword>
<keyword id="KW-0808">Transferase</keyword>
<keyword id="KW-0819">tRNA processing</keyword>